<feature type="chain" id="PRO_0000052114" description="Indolin-2-one monooxygenase">
    <location>
        <begin position="1"/>
        <end position="536"/>
    </location>
</feature>
<feature type="transmembrane region" description="Helical" evidence="2">
    <location>
        <begin position="18"/>
        <end position="34"/>
    </location>
</feature>
<feature type="binding site" description="axial binding residue" evidence="1">
    <location>
        <position position="480"/>
    </location>
    <ligand>
        <name>heme</name>
        <dbReference type="ChEBI" id="CHEBI:30413"/>
    </ligand>
    <ligandPart>
        <name>Fe</name>
        <dbReference type="ChEBI" id="CHEBI:18248"/>
    </ligandPart>
</feature>
<keyword id="KW-0349">Heme</keyword>
<keyword id="KW-0408">Iron</keyword>
<keyword id="KW-0472">Membrane</keyword>
<keyword id="KW-0479">Metal-binding</keyword>
<keyword id="KW-0503">Monooxygenase</keyword>
<keyword id="KW-0520">NAD</keyword>
<keyword id="KW-0521">NADP</keyword>
<keyword id="KW-0560">Oxidoreductase</keyword>
<keyword id="KW-1185">Reference proteome</keyword>
<keyword id="KW-0812">Transmembrane</keyword>
<keyword id="KW-1133">Transmembrane helix</keyword>
<comment type="function">
    <text evidence="3">Catalyzes the conversion of indolin-2-one to 3-hydroxyindolin-2-one.</text>
</comment>
<comment type="catalytic activity">
    <reaction evidence="3">
        <text>indolin-2-one + reduced [NADPH--hemoprotein reductase] + O2 = 3-hydroxyindolin-2-one + oxidized [NADPH--hemoprotein reductase] + H2O + H(+)</text>
        <dbReference type="Rhea" id="RHEA:31919"/>
        <dbReference type="Rhea" id="RHEA-COMP:11964"/>
        <dbReference type="Rhea" id="RHEA-COMP:11965"/>
        <dbReference type="ChEBI" id="CHEBI:15377"/>
        <dbReference type="ChEBI" id="CHEBI:15378"/>
        <dbReference type="ChEBI" id="CHEBI:15379"/>
        <dbReference type="ChEBI" id="CHEBI:28536"/>
        <dbReference type="ChEBI" id="CHEBI:31697"/>
        <dbReference type="ChEBI" id="CHEBI:57618"/>
        <dbReference type="ChEBI" id="CHEBI:58210"/>
        <dbReference type="EC" id="1.14.14.157"/>
    </reaction>
</comment>
<comment type="cofactor">
    <cofactor evidence="1">
        <name>heme</name>
        <dbReference type="ChEBI" id="CHEBI:30413"/>
    </cofactor>
</comment>
<comment type="pathway">
    <text>Secondary metabolite biosynthesis; 2,4-dihydroxy-1,4-benzoxazin-3-one biosynthesis; 2,4-dihydroxy-1,4-benzoxazin-3-one from indoleglycerol phosphate: step 3/5.</text>
</comment>
<comment type="subcellular location">
    <subcellularLocation>
        <location evidence="4">Membrane</location>
        <topology evidence="4">Single-pass membrane protein</topology>
    </subcellularLocation>
</comment>
<comment type="similarity">
    <text evidence="4">Belongs to the cytochrome P450 family.</text>
</comment>
<evidence type="ECO:0000250" key="1"/>
<evidence type="ECO:0000255" key="2"/>
<evidence type="ECO:0000269" key="3">
    <source>
    </source>
</evidence>
<evidence type="ECO:0000305" key="4"/>
<dbReference type="EC" id="1.14.14.157" evidence="3"/>
<dbReference type="EMBL" id="X81829">
    <property type="protein sequence ID" value="CAA57423.1"/>
    <property type="molecule type" value="mRNA"/>
</dbReference>
<dbReference type="EMBL" id="Y11404">
    <property type="protein sequence ID" value="CAA72208.1"/>
    <property type="molecule type" value="Genomic_DNA"/>
</dbReference>
<dbReference type="PIR" id="T03034">
    <property type="entry name" value="T03034"/>
</dbReference>
<dbReference type="SMR" id="Q43255"/>
<dbReference type="STRING" id="4577.Q43255"/>
<dbReference type="PaxDb" id="4577-GRMZM2G167549_P05"/>
<dbReference type="KEGG" id="ag:CAA72208"/>
<dbReference type="MaizeGDB" id="136233"/>
<dbReference type="eggNOG" id="KOG0156">
    <property type="taxonomic scope" value="Eukaryota"/>
</dbReference>
<dbReference type="InParanoid" id="Q43255"/>
<dbReference type="BioCyc" id="MetaCyc:MONOMER-10170"/>
<dbReference type="BRENDA" id="1.14.14.157">
    <property type="organism ID" value="6752"/>
</dbReference>
<dbReference type="UniPathway" id="UPA00872">
    <property type="reaction ID" value="UER00849"/>
</dbReference>
<dbReference type="Proteomes" id="UP000007305">
    <property type="component" value="Unplaced"/>
</dbReference>
<dbReference type="ExpressionAtlas" id="Q43255">
    <property type="expression patterns" value="baseline and differential"/>
</dbReference>
<dbReference type="GO" id="GO:0016020">
    <property type="term" value="C:membrane"/>
    <property type="evidence" value="ECO:0000318"/>
    <property type="project" value="GO_Central"/>
</dbReference>
<dbReference type="GO" id="GO:0020037">
    <property type="term" value="F:heme binding"/>
    <property type="evidence" value="ECO:0007669"/>
    <property type="project" value="InterPro"/>
</dbReference>
<dbReference type="GO" id="GO:0036191">
    <property type="term" value="F:indolin-2-one monooxygenase activity"/>
    <property type="evidence" value="ECO:0007669"/>
    <property type="project" value="UniProtKB-EC"/>
</dbReference>
<dbReference type="GO" id="GO:0005506">
    <property type="term" value="F:iron ion binding"/>
    <property type="evidence" value="ECO:0007669"/>
    <property type="project" value="InterPro"/>
</dbReference>
<dbReference type="GO" id="GO:0016709">
    <property type="term" value="F:oxidoreductase activity, acting on paired donors, with incorporation or reduction of molecular oxygen, NAD(P)H as one donor, and incorporation of one atom of oxygen"/>
    <property type="evidence" value="ECO:0000318"/>
    <property type="project" value="GO_Central"/>
</dbReference>
<dbReference type="CDD" id="cd11072">
    <property type="entry name" value="CYP71-like"/>
    <property type="match status" value="1"/>
</dbReference>
<dbReference type="FunFam" id="1.10.630.10:FF:000055">
    <property type="entry name" value="Cytochrome P450 71A26"/>
    <property type="match status" value="1"/>
</dbReference>
<dbReference type="Gene3D" id="1.10.630.10">
    <property type="entry name" value="Cytochrome P450"/>
    <property type="match status" value="1"/>
</dbReference>
<dbReference type="InterPro" id="IPR001128">
    <property type="entry name" value="Cyt_P450"/>
</dbReference>
<dbReference type="InterPro" id="IPR017972">
    <property type="entry name" value="Cyt_P450_CS"/>
</dbReference>
<dbReference type="InterPro" id="IPR002401">
    <property type="entry name" value="Cyt_P450_E_grp-I"/>
</dbReference>
<dbReference type="InterPro" id="IPR036396">
    <property type="entry name" value="Cyt_P450_sf"/>
</dbReference>
<dbReference type="PANTHER" id="PTHR47955">
    <property type="entry name" value="CYTOCHROME P450 FAMILY 71 PROTEIN"/>
    <property type="match status" value="1"/>
</dbReference>
<dbReference type="PANTHER" id="PTHR47955:SF14">
    <property type="entry name" value="OS01G0543600 PROTEIN"/>
    <property type="match status" value="1"/>
</dbReference>
<dbReference type="Pfam" id="PF00067">
    <property type="entry name" value="p450"/>
    <property type="match status" value="1"/>
</dbReference>
<dbReference type="PRINTS" id="PR00463">
    <property type="entry name" value="EP450I"/>
</dbReference>
<dbReference type="PRINTS" id="PR00385">
    <property type="entry name" value="P450"/>
</dbReference>
<dbReference type="SUPFAM" id="SSF48264">
    <property type="entry name" value="Cytochrome P450"/>
    <property type="match status" value="1"/>
</dbReference>
<dbReference type="PROSITE" id="PS00086">
    <property type="entry name" value="CYTOCHROME_P450"/>
    <property type="match status" value="1"/>
</dbReference>
<organism>
    <name type="scientific">Zea mays</name>
    <name type="common">Maize</name>
    <dbReference type="NCBI Taxonomy" id="4577"/>
    <lineage>
        <taxon>Eukaryota</taxon>
        <taxon>Viridiplantae</taxon>
        <taxon>Streptophyta</taxon>
        <taxon>Embryophyta</taxon>
        <taxon>Tracheophyta</taxon>
        <taxon>Spermatophyta</taxon>
        <taxon>Magnoliopsida</taxon>
        <taxon>Liliopsida</taxon>
        <taxon>Poales</taxon>
        <taxon>Poaceae</taxon>
        <taxon>PACMAD clade</taxon>
        <taxon>Panicoideae</taxon>
        <taxon>Andropogonodae</taxon>
        <taxon>Andropogoneae</taxon>
        <taxon>Tripsacinae</taxon>
        <taxon>Zea</taxon>
    </lineage>
</organism>
<protein>
    <recommendedName>
        <fullName>Indolin-2-one monooxygenase</fullName>
        <ecNumber evidence="3">1.14.14.157</ecNumber>
    </recommendedName>
    <alternativeName>
        <fullName>Cytochrome P450 71C2</fullName>
    </alternativeName>
    <alternativeName>
        <fullName>Protein benzoxazineless 3</fullName>
    </alternativeName>
</protein>
<name>C71C2_MAIZE</name>
<sequence>MALGAAYHHYLQLAGDHGTATHALLLGVLIFLVIRLVSARRTGTTSANKRKQQQRLPLPPWPPGKLPIIGHLHLIGAETHISIRDLDAKHGRNGLLLLRIGAVPTLFVSSPSAADAVLRTQDHIFASRPPWMAAEIIRYGPSDVAFVPYGEYGRQGRKLLTTHMLSTKKVQSFRHGRQEEVRLVMDKIRAAATAAPPAAVDLSDLLSGYTNDVVSRAVLGASHRNQGRNRLFSELTEINVSLLAGFNLEDYFPPNMAMADVLLRLVSVKARRLNQRWNDVFDELIQEHVQSRPSGESEESEADFIHVLLSIQQEYGLTTDNLKAILVDMFEAGIETSYLTLEYGMAELINNRHVMEKLQTEVRTTMGSPDGKKLDMLAEEDLGSMPYLKATIKETLRLHPPAPFLLPHYSTADSEIDGYFVPAGTRVLVHAWALGRDRTTWEKPEEFMPERFVQEPGAVDVHMKGKDLRFIPFGSGRRICPGMNFGFATMEVMLANLMYHFDWEVPGSGAGVSMEESFGLTLRRKEKLLLVPRIAS</sequence>
<gene>
    <name type="primary">CYP71C2</name>
    <name type="synonym">BX3</name>
</gene>
<proteinExistence type="evidence at protein level"/>
<accession>Q43255</accession>
<accession>O04991</accession>
<reference key="1">
    <citation type="journal article" date="1995" name="Mol. Gen. Genet.">
        <title>Expression of a cytochrome P450 gene family in maize.</title>
        <authorList>
            <person name="Frey M."/>
            <person name="Kliem R."/>
            <person name="Saedler H."/>
            <person name="Gierl A."/>
        </authorList>
    </citation>
    <scope>NUCLEOTIDE SEQUENCE [MRNA]</scope>
    <source>
        <strain>cv. CI31A</strain>
    </source>
</reference>
<reference key="2">
    <citation type="journal article" date="1997" name="Science">
        <title>Analysis of a chemical plant defense mechanism in grasses.</title>
        <authorList>
            <person name="Frey M."/>
            <person name="Chomet P."/>
            <person name="Glawischnig E."/>
            <person name="Stettner C."/>
            <person name="Grun S."/>
            <person name="Winklmair A."/>
            <person name="Eisenreich W."/>
            <person name="Bacher A."/>
            <person name="Meeley R.B."/>
            <person name="Briggs S.P."/>
            <person name="Simcox K."/>
            <person name="Gierl A."/>
        </authorList>
    </citation>
    <scope>NUCLEOTIDE SEQUENCE [GENOMIC DNA]</scope>
    <scope>FUNCTION</scope>
    <scope>CATALYTIC ACTIVITY</scope>
    <source>
        <strain>cv. CI31A</strain>
    </source>
</reference>